<dbReference type="EC" id="1.2.1.38" evidence="1"/>
<dbReference type="EMBL" id="CP000611">
    <property type="protein sequence ID" value="ABQ73409.1"/>
    <property type="molecule type" value="Genomic_DNA"/>
</dbReference>
<dbReference type="RefSeq" id="WP_003898960.1">
    <property type="nucleotide sequence ID" value="NZ_CP016972.1"/>
</dbReference>
<dbReference type="SMR" id="A5U309"/>
<dbReference type="GeneID" id="45425622"/>
<dbReference type="KEGG" id="mra:MRA_1663"/>
<dbReference type="eggNOG" id="COG0002">
    <property type="taxonomic scope" value="Bacteria"/>
</dbReference>
<dbReference type="HOGENOM" id="CLU_006384_0_0_11"/>
<dbReference type="UniPathway" id="UPA00068">
    <property type="reaction ID" value="UER00108"/>
</dbReference>
<dbReference type="Proteomes" id="UP000001988">
    <property type="component" value="Chromosome"/>
</dbReference>
<dbReference type="GO" id="GO:0005737">
    <property type="term" value="C:cytoplasm"/>
    <property type="evidence" value="ECO:0007669"/>
    <property type="project" value="UniProtKB-SubCell"/>
</dbReference>
<dbReference type="GO" id="GO:0003942">
    <property type="term" value="F:N-acetyl-gamma-glutamyl-phosphate reductase activity"/>
    <property type="evidence" value="ECO:0007669"/>
    <property type="project" value="UniProtKB-UniRule"/>
</dbReference>
<dbReference type="GO" id="GO:0051287">
    <property type="term" value="F:NAD binding"/>
    <property type="evidence" value="ECO:0007669"/>
    <property type="project" value="InterPro"/>
</dbReference>
<dbReference type="GO" id="GO:0070401">
    <property type="term" value="F:NADP+ binding"/>
    <property type="evidence" value="ECO:0007669"/>
    <property type="project" value="InterPro"/>
</dbReference>
<dbReference type="GO" id="GO:0006526">
    <property type="term" value="P:L-arginine biosynthetic process"/>
    <property type="evidence" value="ECO:0007669"/>
    <property type="project" value="UniProtKB-UniRule"/>
</dbReference>
<dbReference type="CDD" id="cd24148">
    <property type="entry name" value="AGPR_1_actinobacAGPR_like"/>
    <property type="match status" value="1"/>
</dbReference>
<dbReference type="CDD" id="cd23934">
    <property type="entry name" value="AGPR_1_C"/>
    <property type="match status" value="1"/>
</dbReference>
<dbReference type="FunFam" id="3.30.360.10:FF:000014">
    <property type="entry name" value="N-acetyl-gamma-glutamyl-phosphate reductase"/>
    <property type="match status" value="1"/>
</dbReference>
<dbReference type="Gene3D" id="3.30.360.10">
    <property type="entry name" value="Dihydrodipicolinate Reductase, domain 2"/>
    <property type="match status" value="1"/>
</dbReference>
<dbReference type="Gene3D" id="3.40.50.720">
    <property type="entry name" value="NAD(P)-binding Rossmann-like Domain"/>
    <property type="match status" value="1"/>
</dbReference>
<dbReference type="HAMAP" id="MF_00150">
    <property type="entry name" value="ArgC_type1"/>
    <property type="match status" value="1"/>
</dbReference>
<dbReference type="InterPro" id="IPR023013">
    <property type="entry name" value="AGPR_AS"/>
</dbReference>
<dbReference type="InterPro" id="IPR000706">
    <property type="entry name" value="AGPR_type-1"/>
</dbReference>
<dbReference type="InterPro" id="IPR036291">
    <property type="entry name" value="NAD(P)-bd_dom_sf"/>
</dbReference>
<dbReference type="InterPro" id="IPR050085">
    <property type="entry name" value="NAGSA_dehydrogenase"/>
</dbReference>
<dbReference type="InterPro" id="IPR000534">
    <property type="entry name" value="Semialdehyde_DH_NAD-bd"/>
</dbReference>
<dbReference type="NCBIfam" id="TIGR01850">
    <property type="entry name" value="argC"/>
    <property type="match status" value="1"/>
</dbReference>
<dbReference type="PANTHER" id="PTHR32338:SF10">
    <property type="entry name" value="N-ACETYL-GAMMA-GLUTAMYL-PHOSPHATE REDUCTASE, CHLOROPLASTIC-RELATED"/>
    <property type="match status" value="1"/>
</dbReference>
<dbReference type="PANTHER" id="PTHR32338">
    <property type="entry name" value="N-ACETYL-GAMMA-GLUTAMYL-PHOSPHATE REDUCTASE, CHLOROPLASTIC-RELATED-RELATED"/>
    <property type="match status" value="1"/>
</dbReference>
<dbReference type="Pfam" id="PF01118">
    <property type="entry name" value="Semialdhyde_dh"/>
    <property type="match status" value="1"/>
</dbReference>
<dbReference type="Pfam" id="PF22698">
    <property type="entry name" value="Semialdhyde_dhC_1"/>
    <property type="match status" value="1"/>
</dbReference>
<dbReference type="SMART" id="SM00859">
    <property type="entry name" value="Semialdhyde_dh"/>
    <property type="match status" value="1"/>
</dbReference>
<dbReference type="SUPFAM" id="SSF55347">
    <property type="entry name" value="Glyceraldehyde-3-phosphate dehydrogenase-like, C-terminal domain"/>
    <property type="match status" value="1"/>
</dbReference>
<dbReference type="SUPFAM" id="SSF51735">
    <property type="entry name" value="NAD(P)-binding Rossmann-fold domains"/>
    <property type="match status" value="1"/>
</dbReference>
<dbReference type="PROSITE" id="PS01224">
    <property type="entry name" value="ARGC"/>
    <property type="match status" value="1"/>
</dbReference>
<sequence>MQNRQVANATKVAVAGASGYAGGEILRLLLGHPAYADGRLRIGALTAATSAGSTLGEHHPHLTPLAHRVVEPTEAAVLGGHDAVFLALPHGHSAVLAQQLSPETLIIDCGADFRLTDAAVWERFYGSSHAGSWPYGLPELPGARDQLRGTRRIAVPGCYPTAALLALFPALAADLIEPAVTVVAVSGTSGAGRAATTDLLGAEVIGSARAYNIAGVHRHTPEIAQGLRAVTDRDVSVSFTPVLIPASRGILATCTARTRSPLSQLRAAYEKAYHAEPFIYLMPEGQLPRTGAVIGSNAAHIAVAVDEDAQTFVAIAAIDNLVKGTAGAAVQSMNLALGWPETDGLSVVGVAP</sequence>
<proteinExistence type="inferred from homology"/>
<comment type="function">
    <text evidence="1">Catalyzes the NADPH-dependent reduction of N-acetyl-5-glutamyl phosphate to yield N-acetyl-L-glutamate 5-semialdehyde.</text>
</comment>
<comment type="catalytic activity">
    <reaction evidence="1">
        <text>N-acetyl-L-glutamate 5-semialdehyde + phosphate + NADP(+) = N-acetyl-L-glutamyl 5-phosphate + NADPH + H(+)</text>
        <dbReference type="Rhea" id="RHEA:21588"/>
        <dbReference type="ChEBI" id="CHEBI:15378"/>
        <dbReference type="ChEBI" id="CHEBI:29123"/>
        <dbReference type="ChEBI" id="CHEBI:43474"/>
        <dbReference type="ChEBI" id="CHEBI:57783"/>
        <dbReference type="ChEBI" id="CHEBI:57936"/>
        <dbReference type="ChEBI" id="CHEBI:58349"/>
        <dbReference type="EC" id="1.2.1.38"/>
    </reaction>
</comment>
<comment type="pathway">
    <text evidence="1">Amino-acid biosynthesis; L-arginine biosynthesis; N(2)-acetyl-L-ornithine from L-glutamate: step 3/4.</text>
</comment>
<comment type="subcellular location">
    <subcellularLocation>
        <location evidence="1">Cytoplasm</location>
    </subcellularLocation>
</comment>
<comment type="similarity">
    <text evidence="1">Belongs to the NAGSA dehydrogenase family. Type 1 subfamily.</text>
</comment>
<protein>
    <recommendedName>
        <fullName evidence="1">N-acetyl-gamma-glutamyl-phosphate reductase</fullName>
        <shortName evidence="1">AGPR</shortName>
        <ecNumber evidence="1">1.2.1.38</ecNumber>
    </recommendedName>
    <alternativeName>
        <fullName evidence="1">N-acetyl-glutamate semialdehyde dehydrogenase</fullName>
        <shortName evidence="1">NAGSA dehydrogenase</shortName>
    </alternativeName>
</protein>
<accession>A5U309</accession>
<evidence type="ECO:0000255" key="1">
    <source>
        <dbReference type="HAMAP-Rule" id="MF_00150"/>
    </source>
</evidence>
<organism>
    <name type="scientific">Mycobacterium tuberculosis (strain ATCC 25177 / H37Ra)</name>
    <dbReference type="NCBI Taxonomy" id="419947"/>
    <lineage>
        <taxon>Bacteria</taxon>
        <taxon>Bacillati</taxon>
        <taxon>Actinomycetota</taxon>
        <taxon>Actinomycetes</taxon>
        <taxon>Mycobacteriales</taxon>
        <taxon>Mycobacteriaceae</taxon>
        <taxon>Mycobacterium</taxon>
        <taxon>Mycobacterium tuberculosis complex</taxon>
    </lineage>
</organism>
<reference key="1">
    <citation type="journal article" date="2008" name="PLoS ONE">
        <title>Genetic basis of virulence attenuation revealed by comparative genomic analysis of Mycobacterium tuberculosis strain H37Ra versus H37Rv.</title>
        <authorList>
            <person name="Zheng H."/>
            <person name="Lu L."/>
            <person name="Wang B."/>
            <person name="Pu S."/>
            <person name="Zhang X."/>
            <person name="Zhu G."/>
            <person name="Shi W."/>
            <person name="Zhang L."/>
            <person name="Wang H."/>
            <person name="Wang S."/>
            <person name="Zhao G."/>
            <person name="Zhang Y."/>
        </authorList>
    </citation>
    <scope>NUCLEOTIDE SEQUENCE [LARGE SCALE GENOMIC DNA]</scope>
    <source>
        <strain>ATCC 25177 / H37Ra</strain>
    </source>
</reference>
<name>ARGC_MYCTA</name>
<feature type="chain" id="PRO_1000011022" description="N-acetyl-gamma-glutamyl-phosphate reductase">
    <location>
        <begin position="1"/>
        <end position="352"/>
    </location>
</feature>
<feature type="active site" evidence="1">
    <location>
        <position position="158"/>
    </location>
</feature>
<keyword id="KW-0028">Amino-acid biosynthesis</keyword>
<keyword id="KW-0055">Arginine biosynthesis</keyword>
<keyword id="KW-0963">Cytoplasm</keyword>
<keyword id="KW-0521">NADP</keyword>
<keyword id="KW-0560">Oxidoreductase</keyword>
<keyword id="KW-1185">Reference proteome</keyword>
<gene>
    <name evidence="1" type="primary">argC</name>
    <name type="ordered locus">MRA_1663</name>
</gene>